<sequence length="488" mass="52156">MSSRESASRRPDPLRVTIMQSPSAFSLTIGGHGVATSDYLPVLNPATRQPIGQCPVASEEHVEQARAAAGDAFAVWRQVPYGKRCEQLQALAGILEAHLDELAQLLTHEQGKPLADARGELAGAIAFCQCAGSLPLPEVVHEQSATRLSKTVREPLGVVVAIVPWNYPVSIAFVKPDRRVGCRKHADSQAGADHAADYLRIGELIRDALPAGVINVLAGNDDLGPWLTGHADVAKISFTGSSVTGRHVARSAAADLKRLTLELGGNDAAVVMADSLSDAVVERVFWSAFTNAGQICMATKRLYIHESIYEAFRDKLVAYAQNVVIGDGSQPGVTMGPLQNAKQFAKVMSLIDAVRQRGGRLIECGQMRGGDGYFLPITFVDLPDESAPEVVEEAFGPLLPLLKFRDVDEVIERVNAARTGWLAASGVVIGRSAHGLQQPSTRSVWSTTGCDHAVYSFGGMKASGYGAESGLEGLLEFTTQKTVIIQQQ</sequence>
<proteinExistence type="inferred from homology"/>
<evidence type="ECO:0000250" key="1"/>
<evidence type="ECO:0000305" key="2"/>
<protein>
    <recommendedName>
        <fullName>Probable aldehyde dehydrogenase</fullName>
        <ecNumber>1.2.1.3</ecNumber>
    </recommendedName>
</protein>
<name>ALDH_PSESP</name>
<reference key="1">
    <citation type="journal article" date="1992" name="J. Biol. Chem.">
        <title>Cytochrome P-450terp. Isolation and purification of the protein and cloning and sequencing of its operon.</title>
        <authorList>
            <person name="Peterson J.A."/>
            <person name="Lu J.-Y."/>
            <person name="Geisselsoder J."/>
            <person name="Graham-Lorence S."/>
            <person name="Carmona C."/>
            <person name="Witney F."/>
            <person name="Lorence M.C."/>
        </authorList>
    </citation>
    <scope>NUCLEOTIDE SEQUENCE [GENOMIC DNA]</scope>
</reference>
<organism>
    <name type="scientific">Pseudomonas sp</name>
    <dbReference type="NCBI Taxonomy" id="306"/>
    <lineage>
        <taxon>Bacteria</taxon>
        <taxon>Pseudomonadati</taxon>
        <taxon>Pseudomonadota</taxon>
        <taxon>Gammaproteobacteria</taxon>
        <taxon>Pseudomonadales</taxon>
        <taxon>Pseudomonadaceae</taxon>
        <taxon>Pseudomonas</taxon>
    </lineage>
</organism>
<accession>P33008</accession>
<gene>
    <name type="primary">terPE</name>
</gene>
<dbReference type="EC" id="1.2.1.3"/>
<dbReference type="EMBL" id="M91440">
    <property type="protein sequence ID" value="AAA25995.1"/>
    <property type="molecule type" value="Genomic_DNA"/>
</dbReference>
<dbReference type="PIR" id="C42971">
    <property type="entry name" value="S27652"/>
</dbReference>
<dbReference type="SMR" id="P33008"/>
<dbReference type="GO" id="GO:0004029">
    <property type="term" value="F:aldehyde dehydrogenase (NAD+) activity"/>
    <property type="evidence" value="ECO:0007669"/>
    <property type="project" value="UniProtKB-EC"/>
</dbReference>
<dbReference type="Gene3D" id="3.40.605.10">
    <property type="entry name" value="Aldehyde Dehydrogenase, Chain A, domain 1"/>
    <property type="match status" value="1"/>
</dbReference>
<dbReference type="Gene3D" id="3.40.309.10">
    <property type="entry name" value="Aldehyde Dehydrogenase, Chain A, domain 2"/>
    <property type="match status" value="1"/>
</dbReference>
<dbReference type="InterPro" id="IPR016161">
    <property type="entry name" value="Ald_DH/histidinol_DH"/>
</dbReference>
<dbReference type="InterPro" id="IPR016163">
    <property type="entry name" value="Ald_DH_C"/>
</dbReference>
<dbReference type="InterPro" id="IPR016160">
    <property type="entry name" value="Ald_DH_CS_CYS"/>
</dbReference>
<dbReference type="InterPro" id="IPR029510">
    <property type="entry name" value="Ald_DH_CS_GLU"/>
</dbReference>
<dbReference type="InterPro" id="IPR016162">
    <property type="entry name" value="Ald_DH_N"/>
</dbReference>
<dbReference type="InterPro" id="IPR015590">
    <property type="entry name" value="Aldehyde_DH_dom"/>
</dbReference>
<dbReference type="PANTHER" id="PTHR11699">
    <property type="entry name" value="ALDEHYDE DEHYDROGENASE-RELATED"/>
    <property type="match status" value="1"/>
</dbReference>
<dbReference type="Pfam" id="PF00171">
    <property type="entry name" value="Aldedh"/>
    <property type="match status" value="1"/>
</dbReference>
<dbReference type="SUPFAM" id="SSF53720">
    <property type="entry name" value="ALDH-like"/>
    <property type="match status" value="1"/>
</dbReference>
<dbReference type="PROSITE" id="PS00070">
    <property type="entry name" value="ALDEHYDE_DEHYDR_CYS"/>
    <property type="match status" value="1"/>
</dbReference>
<dbReference type="PROSITE" id="PS00687">
    <property type="entry name" value="ALDEHYDE_DEHYDR_GLU"/>
    <property type="match status" value="1"/>
</dbReference>
<feature type="chain" id="PRO_0000056452" description="Probable aldehyde dehydrogenase">
    <location>
        <begin position="1"/>
        <end position="488"/>
    </location>
</feature>
<feature type="active site" evidence="1">
    <location>
        <position position="262"/>
    </location>
</feature>
<feature type="active site" evidence="1">
    <location>
        <position position="296"/>
    </location>
</feature>
<feature type="binding site" evidence="1">
    <location>
        <begin position="240"/>
        <end position="245"/>
    </location>
    <ligand>
        <name>NAD(+)</name>
        <dbReference type="ChEBI" id="CHEBI:57540"/>
    </ligand>
</feature>
<keyword id="KW-0520">NAD</keyword>
<keyword id="KW-0560">Oxidoreductase</keyword>
<comment type="function">
    <text>Involved in an alpha-terpineol oxidation system.</text>
</comment>
<comment type="catalytic activity">
    <reaction>
        <text>an aldehyde + NAD(+) + H2O = a carboxylate + NADH + 2 H(+)</text>
        <dbReference type="Rhea" id="RHEA:16185"/>
        <dbReference type="ChEBI" id="CHEBI:15377"/>
        <dbReference type="ChEBI" id="CHEBI:15378"/>
        <dbReference type="ChEBI" id="CHEBI:17478"/>
        <dbReference type="ChEBI" id="CHEBI:29067"/>
        <dbReference type="ChEBI" id="CHEBI:57540"/>
        <dbReference type="ChEBI" id="CHEBI:57945"/>
        <dbReference type="EC" id="1.2.1.3"/>
    </reaction>
</comment>
<comment type="similarity">
    <text evidence="2">Belongs to the aldehyde dehydrogenase family.</text>
</comment>